<dbReference type="EMBL" id="D50617">
    <property type="protein sequence ID" value="BAA09247.1"/>
    <property type="molecule type" value="Genomic_DNA"/>
</dbReference>
<dbReference type="EMBL" id="BK006940">
    <property type="protein sequence ID" value="DAA12448.1"/>
    <property type="molecule type" value="Genomic_DNA"/>
</dbReference>
<dbReference type="PIR" id="S56263">
    <property type="entry name" value="S56263"/>
</dbReference>
<dbReference type="RefSeq" id="NP_116663.1">
    <property type="nucleotide sequence ID" value="NM_001179973.1"/>
</dbReference>
<dbReference type="SMR" id="P43592"/>
<dbReference type="BioGRID" id="31157">
    <property type="interactions" value="198"/>
</dbReference>
<dbReference type="ComplexPortal" id="CPX-1197">
    <property type="entry name" value="FAR complex"/>
</dbReference>
<dbReference type="DIP" id="DIP-1315N"/>
<dbReference type="FunCoup" id="P43592">
    <property type="interactions" value="88"/>
</dbReference>
<dbReference type="IntAct" id="P43592">
    <property type="interactions" value="12"/>
</dbReference>
<dbReference type="MINT" id="P43592"/>
<dbReference type="STRING" id="4932.YFR008W"/>
<dbReference type="iPTMnet" id="P43592"/>
<dbReference type="PaxDb" id="4932-YFR008W"/>
<dbReference type="PeptideAtlas" id="P43592"/>
<dbReference type="EnsemblFungi" id="YFR008W_mRNA">
    <property type="protein sequence ID" value="YFR008W"/>
    <property type="gene ID" value="YFR008W"/>
</dbReference>
<dbReference type="GeneID" id="850559"/>
<dbReference type="KEGG" id="sce:YFR008W"/>
<dbReference type="AGR" id="SGD:S000001904"/>
<dbReference type="SGD" id="S000001904">
    <property type="gene designation" value="FAR7"/>
</dbReference>
<dbReference type="VEuPathDB" id="FungiDB:YFR008W"/>
<dbReference type="eggNOG" id="ENOG502S5IA">
    <property type="taxonomic scope" value="Eukaryota"/>
</dbReference>
<dbReference type="HOGENOM" id="CLU_103442_0_0_1"/>
<dbReference type="InParanoid" id="P43592"/>
<dbReference type="OMA" id="HMYLLVN"/>
<dbReference type="OrthoDB" id="4067912at2759"/>
<dbReference type="BioCyc" id="YEAST:G3O-30461-MONOMER"/>
<dbReference type="BioGRID-ORCS" id="850559">
    <property type="hits" value="0 hits in 10 CRISPR screens"/>
</dbReference>
<dbReference type="PRO" id="PR:P43592"/>
<dbReference type="Proteomes" id="UP000002311">
    <property type="component" value="Chromosome VI"/>
</dbReference>
<dbReference type="RNAct" id="P43592">
    <property type="molecule type" value="protein"/>
</dbReference>
<dbReference type="GO" id="GO:0005829">
    <property type="term" value="C:cytosol"/>
    <property type="evidence" value="ECO:0007005"/>
    <property type="project" value="SGD"/>
</dbReference>
<dbReference type="GO" id="GO:0005783">
    <property type="term" value="C:endoplasmic reticulum"/>
    <property type="evidence" value="ECO:0000314"/>
    <property type="project" value="SGD"/>
</dbReference>
<dbReference type="GO" id="GO:0005789">
    <property type="term" value="C:endoplasmic reticulum membrane"/>
    <property type="evidence" value="ECO:0000303"/>
    <property type="project" value="ComplexPortal"/>
</dbReference>
<dbReference type="GO" id="GO:0090443">
    <property type="term" value="C:FAR/SIN/STRIPAK complex"/>
    <property type="evidence" value="ECO:0000303"/>
    <property type="project" value="ComplexPortal"/>
</dbReference>
<dbReference type="GO" id="GO:0071444">
    <property type="term" value="P:cellular response to pheromone"/>
    <property type="evidence" value="ECO:0000303"/>
    <property type="project" value="ComplexPortal"/>
</dbReference>
<dbReference type="GO" id="GO:0000321">
    <property type="term" value="P:re-entry into mitotic cell cycle after pheromone arrest"/>
    <property type="evidence" value="ECO:0000316"/>
    <property type="project" value="SGD"/>
</dbReference>
<dbReference type="GO" id="GO:0051726">
    <property type="term" value="P:regulation of cell cycle"/>
    <property type="evidence" value="ECO:0000303"/>
    <property type="project" value="ComplexPortal"/>
</dbReference>
<comment type="function">
    <text evidence="1">Participates in the control of the reentry into the cell cycle following pheromone treatment.</text>
</comment>
<comment type="subunit">
    <text>Component of a complex at least composed of FAR3, FAR7, FAR8, FAR10, FAR11 and VPS64.</text>
</comment>
<comment type="interaction">
    <interactant intactId="EBI-22932">
        <id>P43592</id>
    </interactant>
    <interactant intactId="EBI-6789">
        <id>P46671</id>
        <label>FAR3</label>
    </interactant>
    <organismsDiffer>false</organismsDiffer>
    <experiments>7</experiments>
</comment>
<comment type="interaction">
    <interactant intactId="EBI-22932">
        <id>P43592</id>
    </interactant>
    <interactant intactId="EBI-28053">
        <id>Q05040</id>
        <label>FAR8</label>
    </interactant>
    <organismsDiffer>false</organismsDiffer>
    <experiments>3</experiments>
</comment>
<comment type="interaction">
    <interactant intactId="EBI-22932">
        <id>P43592</id>
    </interactant>
    <interactant intactId="EBI-30418">
        <id>Q03944</id>
        <label>VPS64</label>
    </interactant>
    <organismsDiffer>false</organismsDiffer>
    <experiments>3</experiments>
</comment>
<comment type="miscellaneous">
    <text evidence="2">Present with 1540 molecules/cell in log phase SD medium.</text>
</comment>
<organism>
    <name type="scientific">Saccharomyces cerevisiae (strain ATCC 204508 / S288c)</name>
    <name type="common">Baker's yeast</name>
    <dbReference type="NCBI Taxonomy" id="559292"/>
    <lineage>
        <taxon>Eukaryota</taxon>
        <taxon>Fungi</taxon>
        <taxon>Dikarya</taxon>
        <taxon>Ascomycota</taxon>
        <taxon>Saccharomycotina</taxon>
        <taxon>Saccharomycetes</taxon>
        <taxon>Saccharomycetales</taxon>
        <taxon>Saccharomycetaceae</taxon>
        <taxon>Saccharomyces</taxon>
    </lineage>
</organism>
<accession>P43592</accession>
<accession>D6VTN8</accession>
<evidence type="ECO:0000269" key="1">
    <source>
    </source>
</evidence>
<evidence type="ECO:0000269" key="2">
    <source>
    </source>
</evidence>
<keyword id="KW-0131">Cell cycle</keyword>
<keyword id="KW-1185">Reference proteome</keyword>
<proteinExistence type="evidence at protein level"/>
<sequence length="221" mass="25915">MSDQINVLSMQQQQQQQQQQQQVYMSPQAENLNHMYLLVNKLVKQLRENQAEKAKILRNIDILSGSLNKYETSEEPHDTTENIALFNRFLEQRGKAPITEKEQLSNNLDENAKDDVMLGVLKRQNSMLRKSLQESKQVTLESMDLLSYSEDSLNYIVAQLRGNILMHHKETIKLIRQKFQTETIPLEDEEFKMYLENVNGLQKLTDISHTYRLLLRLHAQD</sequence>
<reference key="1">
    <citation type="journal article" date="1995" name="Nat. Genet.">
        <title>Analysis of the nucleotide sequence of chromosome VI from Saccharomyces cerevisiae.</title>
        <authorList>
            <person name="Murakami Y."/>
            <person name="Naitou M."/>
            <person name="Hagiwara H."/>
            <person name="Shibata T."/>
            <person name="Ozawa M."/>
            <person name="Sasanuma S."/>
            <person name="Sasanuma M."/>
            <person name="Tsuchiya Y."/>
            <person name="Soeda E."/>
            <person name="Yokoyama K."/>
            <person name="Yamazaki M."/>
            <person name="Tashiro H."/>
            <person name="Eki T."/>
        </authorList>
    </citation>
    <scope>NUCLEOTIDE SEQUENCE [LARGE SCALE GENOMIC DNA]</scope>
    <source>
        <strain>ATCC 204508 / S288c</strain>
    </source>
</reference>
<reference key="2">
    <citation type="journal article" date="2014" name="G3 (Bethesda)">
        <title>The reference genome sequence of Saccharomyces cerevisiae: Then and now.</title>
        <authorList>
            <person name="Engel S.R."/>
            <person name="Dietrich F.S."/>
            <person name="Fisk D.G."/>
            <person name="Binkley G."/>
            <person name="Balakrishnan R."/>
            <person name="Costanzo M.C."/>
            <person name="Dwight S.S."/>
            <person name="Hitz B.C."/>
            <person name="Karra K."/>
            <person name="Nash R.S."/>
            <person name="Weng S."/>
            <person name="Wong E.D."/>
            <person name="Lloyd P."/>
            <person name="Skrzypek M.S."/>
            <person name="Miyasato S.R."/>
            <person name="Simison M."/>
            <person name="Cherry J.M."/>
        </authorList>
    </citation>
    <scope>GENOME REANNOTATION</scope>
    <source>
        <strain>ATCC 204508 / S288c</strain>
    </source>
</reference>
<reference key="3">
    <citation type="journal article" date="2003" name="Mol. Cell. Biol.">
        <title>Far3 and five interacting proteins prevent premature recovery from pheromone arrest in the budding yeast Saccharomyces cerevisiae.</title>
        <authorList>
            <person name="Kemp H.A."/>
            <person name="Sprague G.F. Jr."/>
        </authorList>
    </citation>
    <scope>FUNCTION</scope>
    <scope>INTERACTION WITH FAR3; FAR8; FAR10; FAR11 AND VPS64</scope>
</reference>
<reference key="4">
    <citation type="journal article" date="2003" name="Nature">
        <title>Global analysis of protein expression in yeast.</title>
        <authorList>
            <person name="Ghaemmaghami S."/>
            <person name="Huh W.-K."/>
            <person name="Bower K."/>
            <person name="Howson R.W."/>
            <person name="Belle A."/>
            <person name="Dephoure N."/>
            <person name="O'Shea E.K."/>
            <person name="Weissman J.S."/>
        </authorList>
    </citation>
    <scope>LEVEL OF PROTEIN EXPRESSION [LARGE SCALE ANALYSIS]</scope>
</reference>
<feature type="chain" id="PRO_0000087192" description="Factor arrest protein 7">
    <location>
        <begin position="1"/>
        <end position="221"/>
    </location>
</feature>
<protein>
    <recommendedName>
        <fullName>Factor arrest protein 7</fullName>
    </recommendedName>
</protein>
<gene>
    <name type="primary">FAR7</name>
    <name type="ordered locus">YFR008W</name>
</gene>
<name>FAR7_YEAST</name>